<dbReference type="EMBL" id="CU928145">
    <property type="protein sequence ID" value="CAV02168.1"/>
    <property type="molecule type" value="Genomic_DNA"/>
</dbReference>
<dbReference type="RefSeq" id="WP_000175940.1">
    <property type="nucleotide sequence ID" value="NC_011748.1"/>
</dbReference>
<dbReference type="EMDB" id="EMD-23673"/>
<dbReference type="SMR" id="B7LEM0"/>
<dbReference type="KEGG" id="eck:EC55989_5036"/>
<dbReference type="HOGENOM" id="CLU_002794_2_1_6"/>
<dbReference type="Proteomes" id="UP000000746">
    <property type="component" value="Chromosome"/>
</dbReference>
<dbReference type="GO" id="GO:0005829">
    <property type="term" value="C:cytosol"/>
    <property type="evidence" value="ECO:0007669"/>
    <property type="project" value="TreeGrafter"/>
</dbReference>
<dbReference type="GO" id="GO:0005525">
    <property type="term" value="F:GTP binding"/>
    <property type="evidence" value="ECO:0007669"/>
    <property type="project" value="UniProtKB-UniRule"/>
</dbReference>
<dbReference type="GO" id="GO:0003924">
    <property type="term" value="F:GTPase activity"/>
    <property type="evidence" value="ECO:0007669"/>
    <property type="project" value="InterPro"/>
</dbReference>
<dbReference type="GO" id="GO:0097216">
    <property type="term" value="F:guanosine tetraphosphate binding"/>
    <property type="evidence" value="ECO:0007669"/>
    <property type="project" value="UniProtKB-ARBA"/>
</dbReference>
<dbReference type="GO" id="GO:0016150">
    <property type="term" value="F:translation release factor activity, codon nonspecific"/>
    <property type="evidence" value="ECO:0007669"/>
    <property type="project" value="TreeGrafter"/>
</dbReference>
<dbReference type="GO" id="GO:0016149">
    <property type="term" value="F:translation release factor activity, codon specific"/>
    <property type="evidence" value="ECO:0007669"/>
    <property type="project" value="UniProtKB-UniRule"/>
</dbReference>
<dbReference type="GO" id="GO:0006449">
    <property type="term" value="P:regulation of translational termination"/>
    <property type="evidence" value="ECO:0007669"/>
    <property type="project" value="UniProtKB-UniRule"/>
</dbReference>
<dbReference type="CDD" id="cd04169">
    <property type="entry name" value="RF3"/>
    <property type="match status" value="1"/>
</dbReference>
<dbReference type="CDD" id="cd03689">
    <property type="entry name" value="RF3_II"/>
    <property type="match status" value="1"/>
</dbReference>
<dbReference type="CDD" id="cd16259">
    <property type="entry name" value="RF3_III"/>
    <property type="match status" value="1"/>
</dbReference>
<dbReference type="FunFam" id="2.40.30.10:FF:000040">
    <property type="entry name" value="Peptide chain release factor 3"/>
    <property type="match status" value="1"/>
</dbReference>
<dbReference type="FunFam" id="3.30.70.3280:FF:000001">
    <property type="entry name" value="Peptide chain release factor 3"/>
    <property type="match status" value="1"/>
</dbReference>
<dbReference type="FunFam" id="3.40.50.300:FF:000184">
    <property type="entry name" value="Peptide chain release factor 3"/>
    <property type="match status" value="1"/>
</dbReference>
<dbReference type="FunFam" id="3.40.50.300:FF:000253">
    <property type="entry name" value="Peptide chain release factor 3"/>
    <property type="match status" value="1"/>
</dbReference>
<dbReference type="Gene3D" id="3.40.50.300">
    <property type="entry name" value="P-loop containing nucleotide triphosphate hydrolases"/>
    <property type="match status" value="3"/>
</dbReference>
<dbReference type="Gene3D" id="3.30.70.3280">
    <property type="entry name" value="Peptide chain release factor 3, domain III"/>
    <property type="match status" value="1"/>
</dbReference>
<dbReference type="HAMAP" id="MF_00072">
    <property type="entry name" value="Rel_fac_3"/>
    <property type="match status" value="1"/>
</dbReference>
<dbReference type="InterPro" id="IPR053905">
    <property type="entry name" value="EF-G-like_DII"/>
</dbReference>
<dbReference type="InterPro" id="IPR035647">
    <property type="entry name" value="EFG_III/V"/>
</dbReference>
<dbReference type="InterPro" id="IPR031157">
    <property type="entry name" value="G_TR_CS"/>
</dbReference>
<dbReference type="InterPro" id="IPR027417">
    <property type="entry name" value="P-loop_NTPase"/>
</dbReference>
<dbReference type="InterPro" id="IPR004548">
    <property type="entry name" value="PrfC"/>
</dbReference>
<dbReference type="InterPro" id="IPR032090">
    <property type="entry name" value="RF3_C"/>
</dbReference>
<dbReference type="InterPro" id="IPR038467">
    <property type="entry name" value="RF3_dom_3_sf"/>
</dbReference>
<dbReference type="InterPro" id="IPR041732">
    <property type="entry name" value="RF3_GTP-bd"/>
</dbReference>
<dbReference type="InterPro" id="IPR005225">
    <property type="entry name" value="Small_GTP-bd"/>
</dbReference>
<dbReference type="InterPro" id="IPR000795">
    <property type="entry name" value="T_Tr_GTP-bd_dom"/>
</dbReference>
<dbReference type="InterPro" id="IPR009000">
    <property type="entry name" value="Transl_B-barrel_sf"/>
</dbReference>
<dbReference type="NCBIfam" id="TIGR00503">
    <property type="entry name" value="prfC"/>
    <property type="match status" value="1"/>
</dbReference>
<dbReference type="NCBIfam" id="NF001964">
    <property type="entry name" value="PRK00741.1"/>
    <property type="match status" value="1"/>
</dbReference>
<dbReference type="NCBIfam" id="TIGR00231">
    <property type="entry name" value="small_GTP"/>
    <property type="match status" value="1"/>
</dbReference>
<dbReference type="PANTHER" id="PTHR43556">
    <property type="entry name" value="PEPTIDE CHAIN RELEASE FACTOR RF3"/>
    <property type="match status" value="1"/>
</dbReference>
<dbReference type="PANTHER" id="PTHR43556:SF2">
    <property type="entry name" value="PEPTIDE CHAIN RELEASE FACTOR RF3"/>
    <property type="match status" value="1"/>
</dbReference>
<dbReference type="Pfam" id="PF22042">
    <property type="entry name" value="EF-G_D2"/>
    <property type="match status" value="1"/>
</dbReference>
<dbReference type="Pfam" id="PF00009">
    <property type="entry name" value="GTP_EFTU"/>
    <property type="match status" value="1"/>
</dbReference>
<dbReference type="Pfam" id="PF16658">
    <property type="entry name" value="RF3_C"/>
    <property type="match status" value="1"/>
</dbReference>
<dbReference type="PRINTS" id="PR00315">
    <property type="entry name" value="ELONGATNFCT"/>
</dbReference>
<dbReference type="SUPFAM" id="SSF54980">
    <property type="entry name" value="EF-G C-terminal domain-like"/>
    <property type="match status" value="1"/>
</dbReference>
<dbReference type="SUPFAM" id="SSF52540">
    <property type="entry name" value="P-loop containing nucleoside triphosphate hydrolases"/>
    <property type="match status" value="1"/>
</dbReference>
<dbReference type="SUPFAM" id="SSF50447">
    <property type="entry name" value="Translation proteins"/>
    <property type="match status" value="1"/>
</dbReference>
<dbReference type="PROSITE" id="PS00301">
    <property type="entry name" value="G_TR_1"/>
    <property type="match status" value="1"/>
</dbReference>
<dbReference type="PROSITE" id="PS51722">
    <property type="entry name" value="G_TR_2"/>
    <property type="match status" value="1"/>
</dbReference>
<evidence type="ECO:0000255" key="1">
    <source>
        <dbReference type="HAMAP-Rule" id="MF_00072"/>
    </source>
</evidence>
<feature type="chain" id="PRO_1000193521" description="Peptide chain release factor 3">
    <location>
        <begin position="1"/>
        <end position="529"/>
    </location>
</feature>
<feature type="domain" description="tr-type G">
    <location>
        <begin position="11"/>
        <end position="280"/>
    </location>
</feature>
<feature type="binding site" evidence="1">
    <location>
        <begin position="20"/>
        <end position="27"/>
    </location>
    <ligand>
        <name>GTP</name>
        <dbReference type="ChEBI" id="CHEBI:37565"/>
    </ligand>
</feature>
<feature type="binding site" evidence="1">
    <location>
        <begin position="88"/>
        <end position="92"/>
    </location>
    <ligand>
        <name>GTP</name>
        <dbReference type="ChEBI" id="CHEBI:37565"/>
    </ligand>
</feature>
<feature type="binding site" evidence="1">
    <location>
        <begin position="142"/>
        <end position="145"/>
    </location>
    <ligand>
        <name>GTP</name>
        <dbReference type="ChEBI" id="CHEBI:37565"/>
    </ligand>
</feature>
<protein>
    <recommendedName>
        <fullName evidence="1">Peptide chain release factor 3</fullName>
        <shortName evidence="1">RF-3</shortName>
    </recommendedName>
</protein>
<sequence>MTLSPYLQEVAKRRTFAIISHPDAGKTTITEKVLLFGQAIQTAGTVKGRGSNQHAKSDWMEMEKQRGISITTSVMQFPYHDCLVNLLDTPGHEDFSEDTYRTLTAVDCCLMVIDAAKGVEDRTRKLMEVTRLRDTPILTFMNKLDRDIRDPMELLDEVENELKIGCAPITWPIGCGKLFKGVYHLYKDETYLYQSGKGHTIQEVRIVKGLNNPDLDAAVGEDLAQQLRDELELVKGASNEFDKELFLAGEITPVFFGTALGNFGVDHMLDGLVEWAPAPMPRQTDTRTVEASEDKFTGFVFKIQANMDPKHRDRVAFMRVVSGKYEKGMKLRQVRTAKDVVISDALTFMAGDRSHVEEAYPGDILGLHNHGTIQIGDTFTQGEMMKFTGIPNFAPELFRRIRLKDPLKQKQLLKGLVQLSEEGAVQVFRPISNNDLIVGAVGVLQFDVVVARLKSEYNVEAVYESVNVATARWVECADAKKFEEFKRKNESQLALDGGDNLAYIATSMVNLRLAQERYPDVQFHQTREH</sequence>
<keyword id="KW-0963">Cytoplasm</keyword>
<keyword id="KW-0342">GTP-binding</keyword>
<keyword id="KW-0547">Nucleotide-binding</keyword>
<keyword id="KW-0648">Protein biosynthesis</keyword>
<keyword id="KW-1185">Reference proteome</keyword>
<comment type="function">
    <text evidence="1">Increases the formation of ribosomal termination complexes and stimulates activities of RF-1 and RF-2. It binds guanine nucleotides and has strong preference for UGA stop codons. It may interact directly with the ribosome. The stimulation of RF-1 and RF-2 is significantly reduced by GTP and GDP, but not by GMP.</text>
</comment>
<comment type="subcellular location">
    <subcellularLocation>
        <location evidence="1">Cytoplasm</location>
    </subcellularLocation>
</comment>
<comment type="similarity">
    <text evidence="1">Belongs to the TRAFAC class translation factor GTPase superfamily. Classic translation factor GTPase family. PrfC subfamily.</text>
</comment>
<organism>
    <name type="scientific">Escherichia coli (strain 55989 / EAEC)</name>
    <dbReference type="NCBI Taxonomy" id="585055"/>
    <lineage>
        <taxon>Bacteria</taxon>
        <taxon>Pseudomonadati</taxon>
        <taxon>Pseudomonadota</taxon>
        <taxon>Gammaproteobacteria</taxon>
        <taxon>Enterobacterales</taxon>
        <taxon>Enterobacteriaceae</taxon>
        <taxon>Escherichia</taxon>
    </lineage>
</organism>
<gene>
    <name evidence="1" type="primary">prfC</name>
    <name type="ordered locus">EC55989_5036</name>
</gene>
<name>RF3_ECO55</name>
<accession>B7LEM0</accession>
<proteinExistence type="inferred from homology"/>
<reference key="1">
    <citation type="journal article" date="2009" name="PLoS Genet.">
        <title>Organised genome dynamics in the Escherichia coli species results in highly diverse adaptive paths.</title>
        <authorList>
            <person name="Touchon M."/>
            <person name="Hoede C."/>
            <person name="Tenaillon O."/>
            <person name="Barbe V."/>
            <person name="Baeriswyl S."/>
            <person name="Bidet P."/>
            <person name="Bingen E."/>
            <person name="Bonacorsi S."/>
            <person name="Bouchier C."/>
            <person name="Bouvet O."/>
            <person name="Calteau A."/>
            <person name="Chiapello H."/>
            <person name="Clermont O."/>
            <person name="Cruveiller S."/>
            <person name="Danchin A."/>
            <person name="Diard M."/>
            <person name="Dossat C."/>
            <person name="Karoui M.E."/>
            <person name="Frapy E."/>
            <person name="Garry L."/>
            <person name="Ghigo J.M."/>
            <person name="Gilles A.M."/>
            <person name="Johnson J."/>
            <person name="Le Bouguenec C."/>
            <person name="Lescat M."/>
            <person name="Mangenot S."/>
            <person name="Martinez-Jehanne V."/>
            <person name="Matic I."/>
            <person name="Nassif X."/>
            <person name="Oztas S."/>
            <person name="Petit M.A."/>
            <person name="Pichon C."/>
            <person name="Rouy Z."/>
            <person name="Ruf C.S."/>
            <person name="Schneider D."/>
            <person name="Tourret J."/>
            <person name="Vacherie B."/>
            <person name="Vallenet D."/>
            <person name="Medigue C."/>
            <person name="Rocha E.P.C."/>
            <person name="Denamur E."/>
        </authorList>
    </citation>
    <scope>NUCLEOTIDE SEQUENCE [LARGE SCALE GENOMIC DNA]</scope>
    <source>
        <strain>55989 / EAEC</strain>
    </source>
</reference>